<name>GLTR1_MYCBP</name>
<organism>
    <name type="scientific">Mycobacterium bovis (strain BCG / Pasteur 1173P2)</name>
    <dbReference type="NCBI Taxonomy" id="410289"/>
    <lineage>
        <taxon>Bacteria</taxon>
        <taxon>Bacillati</taxon>
        <taxon>Actinomycetota</taxon>
        <taxon>Actinomycetes</taxon>
        <taxon>Mycobacteriales</taxon>
        <taxon>Mycobacteriaceae</taxon>
        <taxon>Mycobacterium</taxon>
        <taxon>Mycobacterium tuberculosis complex</taxon>
    </lineage>
</organism>
<evidence type="ECO:0000250" key="1"/>
<evidence type="ECO:0000305" key="2"/>
<sequence>MAAPMFSIIIPTLNVAAVLPACLDSIARQTCGDFELVLVDGGSTDETLDIANIFAPNLGERLIIHRDTDQGVYDAMNRGVDLATGTWLLFLGADDSLYEADTLARVAAFIGEHEPSDLVYGDVIMRSTNFRWGGAFDLDRLLFKRNICHQAIFYRRGLFGTIGPYNLRYRVLADWDFNIRCFSNPALVTRYMHVVVASYNEFGGLSNTIVDKEFLKRLPMSTRLGIRLVIVLVRRWPKVISRAMVMRTVISWRRRR</sequence>
<gene>
    <name type="ordered locus">BCG_2978</name>
</gene>
<comment type="function">
    <text evidence="1">Involved in glycosylation steps downstream of mono-O-methyl-glycosyl-p-hydroxybenzoic acid derivative (p-HBAD I) and 2-O-methyl-rhamnosyl-phenolphthiocerol dimycocerosate (mycoside B) during the p-hydroxybenzoic acid derivatives (p-HBAD) and glycosylated phenolphthiocerol dimycocerosates (PGL) biosynthesis.</text>
</comment>
<comment type="similarity">
    <text evidence="2">Belongs to the glycosyltransferase 2 family.</text>
</comment>
<comment type="sequence caution" evidence="2">
    <conflict type="erroneous initiation">
        <sequence resource="EMBL-CDS" id="CAL72967"/>
    </conflict>
</comment>
<accession>A1KMV1</accession>
<protein>
    <recommendedName>
        <fullName>PGL/p-HBAD biosynthesis glycosyltransferase BCG_2978</fullName>
        <ecNumber>2.4.1.-</ecNumber>
    </recommendedName>
</protein>
<dbReference type="EC" id="2.4.1.-"/>
<dbReference type="EMBL" id="AM408590">
    <property type="protein sequence ID" value="CAL72967.1"/>
    <property type="status" value="ALT_INIT"/>
    <property type="molecule type" value="Genomic_DNA"/>
</dbReference>
<dbReference type="SMR" id="A1KMV1"/>
<dbReference type="CAZy" id="GT2">
    <property type="family name" value="Glycosyltransferase Family 2"/>
</dbReference>
<dbReference type="KEGG" id="mbb:BCG_2978"/>
<dbReference type="HOGENOM" id="CLU_025996_21_1_11"/>
<dbReference type="Proteomes" id="UP000001472">
    <property type="component" value="Chromosome"/>
</dbReference>
<dbReference type="GO" id="GO:0016758">
    <property type="term" value="F:hexosyltransferase activity"/>
    <property type="evidence" value="ECO:0007669"/>
    <property type="project" value="UniProtKB-ARBA"/>
</dbReference>
<dbReference type="GO" id="GO:0009058">
    <property type="term" value="P:biosynthetic process"/>
    <property type="evidence" value="ECO:0007669"/>
    <property type="project" value="UniProtKB-ARBA"/>
</dbReference>
<dbReference type="CDD" id="cd06433">
    <property type="entry name" value="GT_2_WfgS_like"/>
    <property type="match status" value="1"/>
</dbReference>
<dbReference type="Gene3D" id="3.90.550.10">
    <property type="entry name" value="Spore Coat Polysaccharide Biosynthesis Protein SpsA, Chain A"/>
    <property type="match status" value="1"/>
</dbReference>
<dbReference type="InterPro" id="IPR001173">
    <property type="entry name" value="Glyco_trans_2-like"/>
</dbReference>
<dbReference type="InterPro" id="IPR029044">
    <property type="entry name" value="Nucleotide-diphossugar_trans"/>
</dbReference>
<dbReference type="PANTHER" id="PTHR22916">
    <property type="entry name" value="GLYCOSYLTRANSFERASE"/>
    <property type="match status" value="1"/>
</dbReference>
<dbReference type="PANTHER" id="PTHR22916:SF3">
    <property type="entry name" value="UDP-GLCNAC:BETAGAL BETA-1,3-N-ACETYLGLUCOSAMINYLTRANSFERASE-LIKE PROTEIN 1"/>
    <property type="match status" value="1"/>
</dbReference>
<dbReference type="Pfam" id="PF00535">
    <property type="entry name" value="Glycos_transf_2"/>
    <property type="match status" value="1"/>
</dbReference>
<dbReference type="SUPFAM" id="SSF53448">
    <property type="entry name" value="Nucleotide-diphospho-sugar transferases"/>
    <property type="match status" value="1"/>
</dbReference>
<proteinExistence type="inferred from homology"/>
<feature type="chain" id="PRO_0000314432" description="PGL/p-HBAD biosynthesis glycosyltransferase BCG_2978">
    <location>
        <begin position="1"/>
        <end position="256"/>
    </location>
</feature>
<reference key="1">
    <citation type="journal article" date="2007" name="Proc. Natl. Acad. Sci. U.S.A.">
        <title>Genome plasticity of BCG and impact on vaccine efficacy.</title>
        <authorList>
            <person name="Brosch R."/>
            <person name="Gordon S.V."/>
            <person name="Garnier T."/>
            <person name="Eiglmeier K."/>
            <person name="Frigui W."/>
            <person name="Valenti P."/>
            <person name="Dos Santos S."/>
            <person name="Duthoy S."/>
            <person name="Lacroix C."/>
            <person name="Garcia-Pelayo C."/>
            <person name="Inwald J.K."/>
            <person name="Golby P."/>
            <person name="Garcia J.N."/>
            <person name="Hewinson R.G."/>
            <person name="Behr M.A."/>
            <person name="Quail M.A."/>
            <person name="Churcher C."/>
            <person name="Barrell B.G."/>
            <person name="Parkhill J."/>
            <person name="Cole S.T."/>
        </authorList>
    </citation>
    <scope>NUCLEOTIDE SEQUENCE [LARGE SCALE GENOMIC DNA]</scope>
    <source>
        <strain>BCG / Pasteur 1173P2</strain>
    </source>
</reference>
<keyword id="KW-0328">Glycosyltransferase</keyword>
<keyword id="KW-0808">Transferase</keyword>